<accession>P0C0H2</accession>
<accession>P0A3H9</accession>
<accession>Q9XB23</accession>
<gene>
    <name type="primary">hup</name>
    <name type="synonym">hlpA</name>
</gene>
<sequence>MANKQDLIAKVAEATELTKKDSAAAVDAVFSTIEAFLAEGEKVQLIGFGNFEVRERAARKGRNPQTGAEIEIAASKVPAFKAGKALKDAVK</sequence>
<reference key="1">
    <citation type="journal article" date="1998" name="Infect. Immun.">
        <title>Streptococcal histone-like protein: primary structure of hlpA and protein binding to lipoteichoic acid and epithelial cells.</title>
        <authorList>
            <person name="Stinson M.W."/>
            <person name="McLaughlin R."/>
            <person name="Choi S.H."/>
            <person name="Juarez Z.E."/>
            <person name="Barnard J."/>
        </authorList>
    </citation>
    <scope>NUCLEOTIDE SEQUENCE [GENOMIC DNA]</scope>
</reference>
<keyword id="KW-0226">DNA condensation</keyword>
<keyword id="KW-0238">DNA-binding</keyword>
<keyword id="KW-0843">Virulence</keyword>
<proteinExistence type="inferred from homology"/>
<evidence type="ECO:0000305" key="1"/>
<dbReference type="EMBL" id="L38946">
    <property type="protein sequence ID" value="AAD40808.1"/>
    <property type="molecule type" value="Genomic_DNA"/>
</dbReference>
<dbReference type="RefSeq" id="WP_002983920.1">
    <property type="nucleotide sequence ID" value="NZ_WXZK01000017.1"/>
</dbReference>
<dbReference type="SMR" id="P0C0H2"/>
<dbReference type="STRING" id="1314.SD89_06475"/>
<dbReference type="eggNOG" id="COG0776">
    <property type="taxonomic scope" value="Bacteria"/>
</dbReference>
<dbReference type="OMA" id="AFSAGKM"/>
<dbReference type="OrthoDB" id="9799835at2"/>
<dbReference type="GO" id="GO:0005829">
    <property type="term" value="C:cytosol"/>
    <property type="evidence" value="ECO:0007669"/>
    <property type="project" value="TreeGrafter"/>
</dbReference>
<dbReference type="GO" id="GO:0003677">
    <property type="term" value="F:DNA binding"/>
    <property type="evidence" value="ECO:0007669"/>
    <property type="project" value="UniProtKB-KW"/>
</dbReference>
<dbReference type="GO" id="GO:0030527">
    <property type="term" value="F:structural constituent of chromatin"/>
    <property type="evidence" value="ECO:0007669"/>
    <property type="project" value="InterPro"/>
</dbReference>
<dbReference type="GO" id="GO:0030261">
    <property type="term" value="P:chromosome condensation"/>
    <property type="evidence" value="ECO:0007669"/>
    <property type="project" value="UniProtKB-KW"/>
</dbReference>
<dbReference type="CDD" id="cd13831">
    <property type="entry name" value="HU"/>
    <property type="match status" value="1"/>
</dbReference>
<dbReference type="FunFam" id="4.10.520.10:FF:000001">
    <property type="entry name" value="DNA-binding protein HU"/>
    <property type="match status" value="1"/>
</dbReference>
<dbReference type="Gene3D" id="4.10.520.10">
    <property type="entry name" value="IHF-like DNA-binding proteins"/>
    <property type="match status" value="1"/>
</dbReference>
<dbReference type="InterPro" id="IPR000119">
    <property type="entry name" value="Hist_DNA-bd"/>
</dbReference>
<dbReference type="InterPro" id="IPR020816">
    <property type="entry name" value="Histone-like_DNA-bd_CS"/>
</dbReference>
<dbReference type="InterPro" id="IPR010992">
    <property type="entry name" value="IHF-like_DNA-bd_dom_sf"/>
</dbReference>
<dbReference type="PANTHER" id="PTHR33175">
    <property type="entry name" value="DNA-BINDING PROTEIN HU"/>
    <property type="match status" value="1"/>
</dbReference>
<dbReference type="PANTHER" id="PTHR33175:SF3">
    <property type="entry name" value="DNA-BINDING PROTEIN HU-BETA"/>
    <property type="match status" value="1"/>
</dbReference>
<dbReference type="Pfam" id="PF00216">
    <property type="entry name" value="Bac_DNA_binding"/>
    <property type="match status" value="1"/>
</dbReference>
<dbReference type="PRINTS" id="PR01727">
    <property type="entry name" value="DNABINDINGHU"/>
</dbReference>
<dbReference type="SMART" id="SM00411">
    <property type="entry name" value="BHL"/>
    <property type="match status" value="1"/>
</dbReference>
<dbReference type="SUPFAM" id="SSF47729">
    <property type="entry name" value="IHF-like DNA-binding proteins"/>
    <property type="match status" value="1"/>
</dbReference>
<dbReference type="PROSITE" id="PS00045">
    <property type="entry name" value="HISTONE_LIKE"/>
    <property type="match status" value="1"/>
</dbReference>
<name>DBH_STRPY</name>
<feature type="chain" id="PRO_0000104981" description="DNA-binding protein HU">
    <location>
        <begin position="1"/>
        <end position="91"/>
    </location>
</feature>
<comment type="function">
    <text>Histone-like DNA-binding protein which is capable of wrapping DNA to stabilize it, and thus to prevent its denaturation under extreme environmental conditions. Also seems to act as a fortuitous virulence factor in delayed sequelae by binding to heparan sulfate-proteoglycans in the extracellular matrix of target organs and acting as a nidus for in situ immune complex formation.</text>
</comment>
<comment type="similarity">
    <text evidence="1">Belongs to the bacterial histone-like protein family.</text>
</comment>
<protein>
    <recommendedName>
        <fullName>DNA-binding protein HU</fullName>
    </recommendedName>
</protein>
<organism>
    <name type="scientific">Streptococcus pyogenes</name>
    <dbReference type="NCBI Taxonomy" id="1314"/>
    <lineage>
        <taxon>Bacteria</taxon>
        <taxon>Bacillati</taxon>
        <taxon>Bacillota</taxon>
        <taxon>Bacilli</taxon>
        <taxon>Lactobacillales</taxon>
        <taxon>Streptococcaceae</taxon>
        <taxon>Streptococcus</taxon>
    </lineage>
</organism>